<organism>
    <name type="scientific">Lactobacillus delbrueckii subsp. bulgaricus (strain ATCC 11842 / DSM 20081 / BCRC 10696 / JCM 1002 / NBRC 13953 / NCIMB 11778 / NCTC 12712 / WDCM 00102 / Lb 14)</name>
    <dbReference type="NCBI Taxonomy" id="390333"/>
    <lineage>
        <taxon>Bacteria</taxon>
        <taxon>Bacillati</taxon>
        <taxon>Bacillota</taxon>
        <taxon>Bacilli</taxon>
        <taxon>Lactobacillales</taxon>
        <taxon>Lactobacillaceae</taxon>
        <taxon>Lactobacillus</taxon>
    </lineage>
</organism>
<gene>
    <name evidence="1" type="primary">tyrS</name>
    <name type="ordered locus">Ldb0256</name>
</gene>
<keyword id="KW-0030">Aminoacyl-tRNA synthetase</keyword>
<keyword id="KW-0067">ATP-binding</keyword>
<keyword id="KW-0963">Cytoplasm</keyword>
<keyword id="KW-0436">Ligase</keyword>
<keyword id="KW-0547">Nucleotide-binding</keyword>
<keyword id="KW-0648">Protein biosynthesis</keyword>
<keyword id="KW-1185">Reference proteome</keyword>
<keyword id="KW-0694">RNA-binding</keyword>
<sequence length="421" mass="47550">MANFDILEDLKWRGAINQETDEEGLRDYLAKHDDLALYCGTDPTGDSLHIGHLIPFMILKRFQLAGYKPVIVIGGGTGSIGDPSGRSTERVLQSEETIKHNEEALTAQMVKLFGTENFRIVNNRDWLGKMNLLEFLRDYGKLFQVNNMLNKEVVASRLKNGISFTEFSYQILQAIDFYILNRDHCVQMQIGGADQWGNITAGIDLIHRLEGADRPAFGLTIPLMLKADGTKFGKSAGGAVWLDPEKTSPYEFYQFWINQDDRDVIKYLKYFTFLKHEEIDALEEKVKTEPWKREAQKRLAEEVTKFVHGEEGLKEAQTVTEALFSGNVKDLTTKQVEIALAKAPSAESGAEKKNLVDFLVDTKIESSKRQAREDVNNGAIYVNGDRIQDTDFEVDPAAAFDGKFVIIRKGKKKYTLVHIKG</sequence>
<dbReference type="EC" id="6.1.1.1" evidence="1"/>
<dbReference type="EMBL" id="CR954253">
    <property type="protein sequence ID" value="CAI97096.1"/>
    <property type="molecule type" value="Genomic_DNA"/>
</dbReference>
<dbReference type="RefSeq" id="WP_011543583.1">
    <property type="nucleotide sequence ID" value="NC_008054.1"/>
</dbReference>
<dbReference type="SMR" id="Q1GBW9"/>
<dbReference type="STRING" id="390333.Ldb0256"/>
<dbReference type="KEGG" id="ldb:Ldb0256"/>
<dbReference type="PATRIC" id="fig|390333.7.peg.231"/>
<dbReference type="eggNOG" id="COG0162">
    <property type="taxonomic scope" value="Bacteria"/>
</dbReference>
<dbReference type="HOGENOM" id="CLU_024003_0_3_9"/>
<dbReference type="BioCyc" id="LDEL390333:LDB_RS01070-MONOMER"/>
<dbReference type="Proteomes" id="UP000001259">
    <property type="component" value="Chromosome"/>
</dbReference>
<dbReference type="GO" id="GO:0005829">
    <property type="term" value="C:cytosol"/>
    <property type="evidence" value="ECO:0007669"/>
    <property type="project" value="TreeGrafter"/>
</dbReference>
<dbReference type="GO" id="GO:0005524">
    <property type="term" value="F:ATP binding"/>
    <property type="evidence" value="ECO:0007669"/>
    <property type="project" value="UniProtKB-UniRule"/>
</dbReference>
<dbReference type="GO" id="GO:0003723">
    <property type="term" value="F:RNA binding"/>
    <property type="evidence" value="ECO:0007669"/>
    <property type="project" value="UniProtKB-KW"/>
</dbReference>
<dbReference type="GO" id="GO:0004831">
    <property type="term" value="F:tyrosine-tRNA ligase activity"/>
    <property type="evidence" value="ECO:0007669"/>
    <property type="project" value="UniProtKB-UniRule"/>
</dbReference>
<dbReference type="GO" id="GO:0006437">
    <property type="term" value="P:tyrosyl-tRNA aminoacylation"/>
    <property type="evidence" value="ECO:0007669"/>
    <property type="project" value="UniProtKB-UniRule"/>
</dbReference>
<dbReference type="CDD" id="cd00165">
    <property type="entry name" value="S4"/>
    <property type="match status" value="1"/>
</dbReference>
<dbReference type="CDD" id="cd00805">
    <property type="entry name" value="TyrRS_core"/>
    <property type="match status" value="1"/>
</dbReference>
<dbReference type="FunFam" id="1.10.240.10:FF:000001">
    <property type="entry name" value="Tyrosine--tRNA ligase"/>
    <property type="match status" value="1"/>
</dbReference>
<dbReference type="Gene3D" id="3.40.50.620">
    <property type="entry name" value="HUPs"/>
    <property type="match status" value="1"/>
</dbReference>
<dbReference type="Gene3D" id="3.10.290.10">
    <property type="entry name" value="RNA-binding S4 domain"/>
    <property type="match status" value="1"/>
</dbReference>
<dbReference type="Gene3D" id="1.10.240.10">
    <property type="entry name" value="Tyrosyl-Transfer RNA Synthetase"/>
    <property type="match status" value="1"/>
</dbReference>
<dbReference type="HAMAP" id="MF_02006">
    <property type="entry name" value="Tyr_tRNA_synth_type1"/>
    <property type="match status" value="1"/>
</dbReference>
<dbReference type="InterPro" id="IPR001412">
    <property type="entry name" value="aa-tRNA-synth_I_CS"/>
</dbReference>
<dbReference type="InterPro" id="IPR002305">
    <property type="entry name" value="aa-tRNA-synth_Ic"/>
</dbReference>
<dbReference type="InterPro" id="IPR014729">
    <property type="entry name" value="Rossmann-like_a/b/a_fold"/>
</dbReference>
<dbReference type="InterPro" id="IPR036986">
    <property type="entry name" value="S4_RNA-bd_sf"/>
</dbReference>
<dbReference type="InterPro" id="IPR054608">
    <property type="entry name" value="SYY-like_C"/>
</dbReference>
<dbReference type="InterPro" id="IPR002307">
    <property type="entry name" value="Tyr-tRNA-ligase"/>
</dbReference>
<dbReference type="InterPro" id="IPR024088">
    <property type="entry name" value="Tyr-tRNA-ligase_bac-type"/>
</dbReference>
<dbReference type="InterPro" id="IPR024107">
    <property type="entry name" value="Tyr-tRNA-ligase_bac_1"/>
</dbReference>
<dbReference type="NCBIfam" id="TIGR00234">
    <property type="entry name" value="tyrS"/>
    <property type="match status" value="1"/>
</dbReference>
<dbReference type="PANTHER" id="PTHR11766:SF0">
    <property type="entry name" value="TYROSINE--TRNA LIGASE, MITOCHONDRIAL"/>
    <property type="match status" value="1"/>
</dbReference>
<dbReference type="PANTHER" id="PTHR11766">
    <property type="entry name" value="TYROSYL-TRNA SYNTHETASE"/>
    <property type="match status" value="1"/>
</dbReference>
<dbReference type="Pfam" id="PF22421">
    <property type="entry name" value="SYY_C-terminal"/>
    <property type="match status" value="1"/>
</dbReference>
<dbReference type="Pfam" id="PF00579">
    <property type="entry name" value="tRNA-synt_1b"/>
    <property type="match status" value="1"/>
</dbReference>
<dbReference type="PRINTS" id="PR01040">
    <property type="entry name" value="TRNASYNTHTYR"/>
</dbReference>
<dbReference type="SUPFAM" id="SSF55174">
    <property type="entry name" value="Alpha-L RNA-binding motif"/>
    <property type="match status" value="1"/>
</dbReference>
<dbReference type="SUPFAM" id="SSF52374">
    <property type="entry name" value="Nucleotidylyl transferase"/>
    <property type="match status" value="1"/>
</dbReference>
<dbReference type="PROSITE" id="PS00178">
    <property type="entry name" value="AA_TRNA_LIGASE_I"/>
    <property type="match status" value="1"/>
</dbReference>
<dbReference type="PROSITE" id="PS50889">
    <property type="entry name" value="S4"/>
    <property type="match status" value="1"/>
</dbReference>
<proteinExistence type="inferred from homology"/>
<accession>Q1GBW9</accession>
<reference key="1">
    <citation type="journal article" date="2006" name="Proc. Natl. Acad. Sci. U.S.A.">
        <title>The complete genome sequence of Lactobacillus bulgaricus reveals extensive and ongoing reductive evolution.</title>
        <authorList>
            <person name="van de Guchte M."/>
            <person name="Penaud S."/>
            <person name="Grimaldi C."/>
            <person name="Barbe V."/>
            <person name="Bryson K."/>
            <person name="Nicolas P."/>
            <person name="Robert C."/>
            <person name="Oztas S."/>
            <person name="Mangenot S."/>
            <person name="Couloux A."/>
            <person name="Loux V."/>
            <person name="Dervyn R."/>
            <person name="Bossy R."/>
            <person name="Bolotin A."/>
            <person name="Batto J.-M."/>
            <person name="Walunas T."/>
            <person name="Gibrat J.-F."/>
            <person name="Bessieres P."/>
            <person name="Weissenbach J."/>
            <person name="Ehrlich S.D."/>
            <person name="Maguin E."/>
        </authorList>
    </citation>
    <scope>NUCLEOTIDE SEQUENCE [LARGE SCALE GENOMIC DNA]</scope>
    <source>
        <strain>ATCC 11842 / DSM 20081 / BCRC 10696 / JCM 1002 / NBRC 13953 / NCIMB 11778 / NCTC 12712 / WDCM 00102 / Lb 14</strain>
    </source>
</reference>
<protein>
    <recommendedName>
        <fullName evidence="1">Tyrosine--tRNA ligase</fullName>
        <ecNumber evidence="1">6.1.1.1</ecNumber>
    </recommendedName>
    <alternativeName>
        <fullName evidence="1">Tyrosyl-tRNA synthetase</fullName>
        <shortName evidence="1">TyrRS</shortName>
    </alternativeName>
</protein>
<name>SYY_LACDA</name>
<comment type="function">
    <text evidence="1">Catalyzes the attachment of tyrosine to tRNA(Tyr) in a two-step reaction: tyrosine is first activated by ATP to form Tyr-AMP and then transferred to the acceptor end of tRNA(Tyr).</text>
</comment>
<comment type="catalytic activity">
    <reaction evidence="1">
        <text>tRNA(Tyr) + L-tyrosine + ATP = L-tyrosyl-tRNA(Tyr) + AMP + diphosphate + H(+)</text>
        <dbReference type="Rhea" id="RHEA:10220"/>
        <dbReference type="Rhea" id="RHEA-COMP:9706"/>
        <dbReference type="Rhea" id="RHEA-COMP:9707"/>
        <dbReference type="ChEBI" id="CHEBI:15378"/>
        <dbReference type="ChEBI" id="CHEBI:30616"/>
        <dbReference type="ChEBI" id="CHEBI:33019"/>
        <dbReference type="ChEBI" id="CHEBI:58315"/>
        <dbReference type="ChEBI" id="CHEBI:78442"/>
        <dbReference type="ChEBI" id="CHEBI:78536"/>
        <dbReference type="ChEBI" id="CHEBI:456215"/>
        <dbReference type="EC" id="6.1.1.1"/>
    </reaction>
</comment>
<comment type="subunit">
    <text evidence="1">Homodimer.</text>
</comment>
<comment type="subcellular location">
    <subcellularLocation>
        <location evidence="1">Cytoplasm</location>
    </subcellularLocation>
</comment>
<comment type="similarity">
    <text evidence="1">Belongs to the class-I aminoacyl-tRNA synthetase family. TyrS type 1 subfamily.</text>
</comment>
<evidence type="ECO:0000255" key="1">
    <source>
        <dbReference type="HAMAP-Rule" id="MF_02006"/>
    </source>
</evidence>
<feature type="chain" id="PRO_1000088595" description="Tyrosine--tRNA ligase">
    <location>
        <begin position="1"/>
        <end position="421"/>
    </location>
</feature>
<feature type="domain" description="S4 RNA-binding" evidence="1">
    <location>
        <begin position="353"/>
        <end position="419"/>
    </location>
</feature>
<feature type="short sequence motif" description="'HIGH' region">
    <location>
        <begin position="43"/>
        <end position="52"/>
    </location>
</feature>
<feature type="short sequence motif" description="'KMSKS' region">
    <location>
        <begin position="231"/>
        <end position="235"/>
    </location>
</feature>
<feature type="binding site" evidence="1">
    <location>
        <position position="38"/>
    </location>
    <ligand>
        <name>L-tyrosine</name>
        <dbReference type="ChEBI" id="CHEBI:58315"/>
    </ligand>
</feature>
<feature type="binding site" evidence="1">
    <location>
        <position position="169"/>
    </location>
    <ligand>
        <name>L-tyrosine</name>
        <dbReference type="ChEBI" id="CHEBI:58315"/>
    </ligand>
</feature>
<feature type="binding site" evidence="1">
    <location>
        <position position="173"/>
    </location>
    <ligand>
        <name>L-tyrosine</name>
        <dbReference type="ChEBI" id="CHEBI:58315"/>
    </ligand>
</feature>
<feature type="binding site" evidence="1">
    <location>
        <position position="234"/>
    </location>
    <ligand>
        <name>ATP</name>
        <dbReference type="ChEBI" id="CHEBI:30616"/>
    </ligand>
</feature>